<dbReference type="EMBL" id="M95799">
    <property type="protein sequence ID" value="AAC36133.1"/>
    <property type="molecule type" value="Genomic_DNA"/>
</dbReference>
<dbReference type="EMBL" id="CP000708">
    <property type="protein sequence ID" value="ABQ61985.1"/>
    <property type="molecule type" value="Genomic_DNA"/>
</dbReference>
<dbReference type="PIR" id="B47042">
    <property type="entry name" value="B47042"/>
</dbReference>
<dbReference type="RefSeq" id="WP_006014538.1">
    <property type="nucleotide sequence ID" value="NC_009505.1"/>
</dbReference>
<dbReference type="SMR" id="Q05980"/>
<dbReference type="GeneID" id="45125374"/>
<dbReference type="KEGG" id="bov:BOV_2042"/>
<dbReference type="HOGENOM" id="CLU_017633_0_7_5"/>
<dbReference type="PhylomeDB" id="Q05980"/>
<dbReference type="PRO" id="PR:Q05980"/>
<dbReference type="Proteomes" id="UP000006383">
    <property type="component" value="Chromosome I"/>
</dbReference>
<dbReference type="GO" id="GO:0005737">
    <property type="term" value="C:cytoplasm"/>
    <property type="evidence" value="ECO:0007669"/>
    <property type="project" value="UniProtKB-SubCell"/>
</dbReference>
<dbReference type="GO" id="GO:0005524">
    <property type="term" value="F:ATP binding"/>
    <property type="evidence" value="ECO:0007669"/>
    <property type="project" value="InterPro"/>
</dbReference>
<dbReference type="GO" id="GO:0031072">
    <property type="term" value="F:heat shock protein binding"/>
    <property type="evidence" value="ECO:0007669"/>
    <property type="project" value="InterPro"/>
</dbReference>
<dbReference type="GO" id="GO:0051082">
    <property type="term" value="F:unfolded protein binding"/>
    <property type="evidence" value="ECO:0007669"/>
    <property type="project" value="UniProtKB-UniRule"/>
</dbReference>
<dbReference type="GO" id="GO:0008270">
    <property type="term" value="F:zinc ion binding"/>
    <property type="evidence" value="ECO:0007669"/>
    <property type="project" value="UniProtKB-UniRule"/>
</dbReference>
<dbReference type="GO" id="GO:0051085">
    <property type="term" value="P:chaperone cofactor-dependent protein refolding"/>
    <property type="evidence" value="ECO:0007669"/>
    <property type="project" value="TreeGrafter"/>
</dbReference>
<dbReference type="GO" id="GO:0006260">
    <property type="term" value="P:DNA replication"/>
    <property type="evidence" value="ECO:0007669"/>
    <property type="project" value="UniProtKB-KW"/>
</dbReference>
<dbReference type="GO" id="GO:0042026">
    <property type="term" value="P:protein refolding"/>
    <property type="evidence" value="ECO:0007669"/>
    <property type="project" value="TreeGrafter"/>
</dbReference>
<dbReference type="GO" id="GO:0009408">
    <property type="term" value="P:response to heat"/>
    <property type="evidence" value="ECO:0007669"/>
    <property type="project" value="InterPro"/>
</dbReference>
<dbReference type="CDD" id="cd06257">
    <property type="entry name" value="DnaJ"/>
    <property type="match status" value="1"/>
</dbReference>
<dbReference type="CDD" id="cd10747">
    <property type="entry name" value="DnaJ_C"/>
    <property type="match status" value="1"/>
</dbReference>
<dbReference type="CDD" id="cd10719">
    <property type="entry name" value="DnaJ_zf"/>
    <property type="match status" value="1"/>
</dbReference>
<dbReference type="FunFam" id="1.10.287.110:FF:000034">
    <property type="entry name" value="Chaperone protein DnaJ"/>
    <property type="match status" value="1"/>
</dbReference>
<dbReference type="FunFam" id="2.10.230.10:FF:000002">
    <property type="entry name" value="Molecular chaperone DnaJ"/>
    <property type="match status" value="1"/>
</dbReference>
<dbReference type="FunFam" id="2.60.260.20:FF:000004">
    <property type="entry name" value="Molecular chaperone DnaJ"/>
    <property type="match status" value="1"/>
</dbReference>
<dbReference type="Gene3D" id="1.10.287.110">
    <property type="entry name" value="DnaJ domain"/>
    <property type="match status" value="1"/>
</dbReference>
<dbReference type="Gene3D" id="2.10.230.10">
    <property type="entry name" value="Heat shock protein DnaJ, cysteine-rich domain"/>
    <property type="match status" value="1"/>
</dbReference>
<dbReference type="Gene3D" id="2.60.260.20">
    <property type="entry name" value="Urease metallochaperone UreE, N-terminal domain"/>
    <property type="match status" value="2"/>
</dbReference>
<dbReference type="HAMAP" id="MF_01152">
    <property type="entry name" value="DnaJ"/>
    <property type="match status" value="1"/>
</dbReference>
<dbReference type="InterPro" id="IPR012724">
    <property type="entry name" value="DnaJ"/>
</dbReference>
<dbReference type="InterPro" id="IPR002939">
    <property type="entry name" value="DnaJ_C"/>
</dbReference>
<dbReference type="InterPro" id="IPR001623">
    <property type="entry name" value="DnaJ_domain"/>
</dbReference>
<dbReference type="InterPro" id="IPR018253">
    <property type="entry name" value="DnaJ_domain_CS"/>
</dbReference>
<dbReference type="InterPro" id="IPR008971">
    <property type="entry name" value="HSP40/DnaJ_pept-bd"/>
</dbReference>
<dbReference type="InterPro" id="IPR001305">
    <property type="entry name" value="HSP_DnaJ_Cys-rich_dom"/>
</dbReference>
<dbReference type="InterPro" id="IPR036410">
    <property type="entry name" value="HSP_DnaJ_Cys-rich_dom_sf"/>
</dbReference>
<dbReference type="InterPro" id="IPR036869">
    <property type="entry name" value="J_dom_sf"/>
</dbReference>
<dbReference type="NCBIfam" id="TIGR02349">
    <property type="entry name" value="DnaJ_bact"/>
    <property type="match status" value="1"/>
</dbReference>
<dbReference type="NCBIfam" id="NF008035">
    <property type="entry name" value="PRK10767.1"/>
    <property type="match status" value="1"/>
</dbReference>
<dbReference type="PANTHER" id="PTHR43096:SF48">
    <property type="entry name" value="CHAPERONE PROTEIN DNAJ"/>
    <property type="match status" value="1"/>
</dbReference>
<dbReference type="PANTHER" id="PTHR43096">
    <property type="entry name" value="DNAJ HOMOLOG 1, MITOCHONDRIAL-RELATED"/>
    <property type="match status" value="1"/>
</dbReference>
<dbReference type="Pfam" id="PF00226">
    <property type="entry name" value="DnaJ"/>
    <property type="match status" value="1"/>
</dbReference>
<dbReference type="Pfam" id="PF01556">
    <property type="entry name" value="DnaJ_C"/>
    <property type="match status" value="1"/>
</dbReference>
<dbReference type="Pfam" id="PF00684">
    <property type="entry name" value="DnaJ_CXXCXGXG"/>
    <property type="match status" value="1"/>
</dbReference>
<dbReference type="PRINTS" id="PR00625">
    <property type="entry name" value="JDOMAIN"/>
</dbReference>
<dbReference type="SMART" id="SM00271">
    <property type="entry name" value="DnaJ"/>
    <property type="match status" value="1"/>
</dbReference>
<dbReference type="SUPFAM" id="SSF46565">
    <property type="entry name" value="Chaperone J-domain"/>
    <property type="match status" value="1"/>
</dbReference>
<dbReference type="SUPFAM" id="SSF57938">
    <property type="entry name" value="DnaJ/Hsp40 cysteine-rich domain"/>
    <property type="match status" value="1"/>
</dbReference>
<dbReference type="SUPFAM" id="SSF49493">
    <property type="entry name" value="HSP40/DnaJ peptide-binding domain"/>
    <property type="match status" value="2"/>
</dbReference>
<dbReference type="PROSITE" id="PS00636">
    <property type="entry name" value="DNAJ_1"/>
    <property type="match status" value="1"/>
</dbReference>
<dbReference type="PROSITE" id="PS50076">
    <property type="entry name" value="DNAJ_2"/>
    <property type="match status" value="1"/>
</dbReference>
<dbReference type="PROSITE" id="PS51188">
    <property type="entry name" value="ZF_CR"/>
    <property type="match status" value="1"/>
</dbReference>
<keyword id="KW-0143">Chaperone</keyword>
<keyword id="KW-0963">Cytoplasm</keyword>
<keyword id="KW-0235">DNA replication</keyword>
<keyword id="KW-0479">Metal-binding</keyword>
<keyword id="KW-0677">Repeat</keyword>
<keyword id="KW-0346">Stress response</keyword>
<keyword id="KW-0862">Zinc</keyword>
<keyword id="KW-0863">Zinc-finger</keyword>
<accession>Q05980</accession>
<accession>A5VT78</accession>
<name>DNAJ_BRUO2</name>
<reference key="1">
    <citation type="journal article" date="1992" name="J. Bacteriol.">
        <title>Cloning and characterization of the Brucella ovis heat shock protein DnaK functionally expressed in Escherichia coli.</title>
        <authorList>
            <person name="Cellier M.F.M."/>
            <person name="Teyssier J."/>
            <person name="Nicolas M."/>
            <person name="Liautard J.P."/>
            <person name="Marti J."/>
            <person name="Sri Widada J."/>
        </authorList>
    </citation>
    <scope>NUCLEOTIDE SEQUENCE [GENOMIC DNA]</scope>
</reference>
<reference key="2">
    <citation type="journal article" date="2009" name="PLoS ONE">
        <title>Genome degradation in Brucella ovis corresponds with narrowing of its host range and tissue tropism.</title>
        <authorList>
            <person name="Tsolis R.M."/>
            <person name="Seshadri R."/>
            <person name="Santos R.L."/>
            <person name="Sangari F.J."/>
            <person name="Lobo J.M."/>
            <person name="de Jong M.F."/>
            <person name="Ren Q."/>
            <person name="Myers G."/>
            <person name="Brinkac L.M."/>
            <person name="Nelson W.C."/>
            <person name="Deboy R.T."/>
            <person name="Angiuoli S."/>
            <person name="Khouri H."/>
            <person name="Dimitrov G."/>
            <person name="Robinson J.R."/>
            <person name="Mulligan S."/>
            <person name="Walker R.L."/>
            <person name="Elzer P.E."/>
            <person name="Hassan K.A."/>
            <person name="Paulsen I.T."/>
        </authorList>
    </citation>
    <scope>NUCLEOTIDE SEQUENCE [LARGE SCALE GENOMIC DNA]</scope>
    <source>
        <strain>ATCC 25840 / 63/290 / NCTC 10512</strain>
    </source>
</reference>
<sequence length="377" mass="41143">MKIDYYEALGVTRTADDKTLKAAFRKLAMQYHPDRNPDDPEAERKFKEIGEAYETLKDPQKRAAYDRFGHAAFENGGMGGGFGNGFGGAGGFADIFEDIFGEMMGGGRRRSNGGRERGADLRYNMEVTLEEAYAGKTAQIRVPTSITCDECSGSGAKPGSQPTTCTMCSGSGRVRAAQGFFSVERTCPGCNGRGQIIKDPCEKCHGQGRVTQERSLSVNIPAGIEDGTRIRLAGEGEAGLRGGPAGDLYIFLSVKPHEFFQRDGADLYCKVPISMTTAALGGQFEVSTLDGTQTRVKVPEGTQNGKQFRLKGKGMPVLRQSVTGDLYIQIDIETPQNLSKRQRELLEEFEKLSWQENSPKSAGLFSRMKEFFEGIGE</sequence>
<feature type="chain" id="PRO_0000070743" description="Chaperone protein DnaJ">
    <location>
        <begin position="1"/>
        <end position="377"/>
    </location>
</feature>
<feature type="domain" description="J" evidence="1">
    <location>
        <begin position="4"/>
        <end position="69"/>
    </location>
</feature>
<feature type="repeat" description="CXXCXGXG motif">
    <location>
        <begin position="148"/>
        <end position="155"/>
    </location>
</feature>
<feature type="repeat" description="CXXCXGXG motif">
    <location>
        <begin position="165"/>
        <end position="172"/>
    </location>
</feature>
<feature type="repeat" description="CXXCXGXG motif">
    <location>
        <begin position="187"/>
        <end position="194"/>
    </location>
</feature>
<feature type="repeat" description="CXXCXGXG motif">
    <location>
        <begin position="201"/>
        <end position="208"/>
    </location>
</feature>
<feature type="zinc finger region" description="CR-type" evidence="1">
    <location>
        <begin position="135"/>
        <end position="213"/>
    </location>
</feature>
<feature type="binding site" evidence="1">
    <location>
        <position position="148"/>
    </location>
    <ligand>
        <name>Zn(2+)</name>
        <dbReference type="ChEBI" id="CHEBI:29105"/>
        <label>1</label>
    </ligand>
</feature>
<feature type="binding site" evidence="1">
    <location>
        <position position="151"/>
    </location>
    <ligand>
        <name>Zn(2+)</name>
        <dbReference type="ChEBI" id="CHEBI:29105"/>
        <label>1</label>
    </ligand>
</feature>
<feature type="binding site" evidence="1">
    <location>
        <position position="165"/>
    </location>
    <ligand>
        <name>Zn(2+)</name>
        <dbReference type="ChEBI" id="CHEBI:29105"/>
        <label>2</label>
    </ligand>
</feature>
<feature type="binding site" evidence="1">
    <location>
        <position position="168"/>
    </location>
    <ligand>
        <name>Zn(2+)</name>
        <dbReference type="ChEBI" id="CHEBI:29105"/>
        <label>2</label>
    </ligand>
</feature>
<feature type="binding site" evidence="1">
    <location>
        <position position="187"/>
    </location>
    <ligand>
        <name>Zn(2+)</name>
        <dbReference type="ChEBI" id="CHEBI:29105"/>
        <label>2</label>
    </ligand>
</feature>
<feature type="binding site" evidence="1">
    <location>
        <position position="190"/>
    </location>
    <ligand>
        <name>Zn(2+)</name>
        <dbReference type="ChEBI" id="CHEBI:29105"/>
        <label>2</label>
    </ligand>
</feature>
<feature type="binding site" evidence="1">
    <location>
        <position position="201"/>
    </location>
    <ligand>
        <name>Zn(2+)</name>
        <dbReference type="ChEBI" id="CHEBI:29105"/>
        <label>1</label>
    </ligand>
</feature>
<feature type="binding site" evidence="1">
    <location>
        <position position="204"/>
    </location>
    <ligand>
        <name>Zn(2+)</name>
        <dbReference type="ChEBI" id="CHEBI:29105"/>
        <label>1</label>
    </ligand>
</feature>
<feature type="sequence conflict" description="In Ref. 1; AAC36133." evidence="2" ref="1">
    <original>G</original>
    <variation>A</variation>
    <location>
        <position position="87"/>
    </location>
</feature>
<feature type="sequence conflict" description="In Ref. 1; AAC36133." evidence="2" ref="1">
    <original>G</original>
    <variation>R</variation>
    <location>
        <position position="107"/>
    </location>
</feature>
<feature type="sequence conflict" description="In Ref. 1; AAC36133." evidence="2" ref="1">
    <original>SNGGR</original>
    <variation>NGA</variation>
    <location>
        <begin position="111"/>
        <end position="115"/>
    </location>
</feature>
<feature type="sequence conflict" description="In Ref. 1; AAC36133." evidence="2" ref="1">
    <original>V</original>
    <variation>C</variation>
    <location>
        <position position="174"/>
    </location>
</feature>
<feature type="sequence conflict" description="In Ref. 1; AAC36133." evidence="2" ref="1">
    <original>E</original>
    <variation>K</variation>
    <location>
        <position position="202"/>
    </location>
</feature>
<feature type="sequence conflict" description="In Ref. 1; AAC36133." evidence="2" ref="1">
    <original>TQE</original>
    <variation>DRG</variation>
    <location>
        <begin position="211"/>
        <end position="213"/>
    </location>
</feature>
<feature type="sequence conflict" description="In Ref. 1; AAC36133." evidence="2" ref="1">
    <original>GIEDGT</original>
    <variation>VSRTEP</variation>
    <location>
        <begin position="223"/>
        <end position="228"/>
    </location>
</feature>
<feature type="sequence conflict" description="In Ref. 1; AAC36133." evidence="2" ref="1">
    <original>F</original>
    <variation>L</variation>
    <location>
        <position position="251"/>
    </location>
</feature>
<feature type="sequence conflict" description="In Ref. 1; AAC36133." evidence="2" ref="1">
    <original>V</original>
    <variation>G</variation>
    <location>
        <position position="317"/>
    </location>
</feature>
<protein>
    <recommendedName>
        <fullName evidence="1">Chaperone protein DnaJ</fullName>
    </recommendedName>
</protein>
<gene>
    <name evidence="1" type="primary">dnaJ</name>
    <name type="ordered locus">BOV_2042</name>
</gene>
<proteinExistence type="evidence at transcript level"/>
<evidence type="ECO:0000255" key="1">
    <source>
        <dbReference type="HAMAP-Rule" id="MF_01152"/>
    </source>
</evidence>
<evidence type="ECO:0000305" key="2"/>
<organism>
    <name type="scientific">Brucella ovis (strain ATCC 25840 / 63/290 / NCTC 10512)</name>
    <dbReference type="NCBI Taxonomy" id="444178"/>
    <lineage>
        <taxon>Bacteria</taxon>
        <taxon>Pseudomonadati</taxon>
        <taxon>Pseudomonadota</taxon>
        <taxon>Alphaproteobacteria</taxon>
        <taxon>Hyphomicrobiales</taxon>
        <taxon>Brucellaceae</taxon>
        <taxon>Brucella/Ochrobactrum group</taxon>
        <taxon>Brucella</taxon>
    </lineage>
</organism>
<comment type="function">
    <text evidence="1">Participates actively in the response to hyperosmotic and heat shock by preventing the aggregation of stress-denatured proteins and by disaggregating proteins, also in an autonomous, DnaK-independent fashion. Unfolded proteins bind initially to DnaJ; upon interaction with the DnaJ-bound protein, DnaK hydrolyzes its bound ATP, resulting in the formation of a stable complex. GrpE releases ADP from DnaK; ATP binding to DnaK triggers the release of the substrate protein, thus completing the reaction cycle. Several rounds of ATP-dependent interactions between DnaJ, DnaK and GrpE are required for fully efficient folding. Also involved, together with DnaK and GrpE, in the DNA replication of plasmids through activation of initiation proteins.</text>
</comment>
<comment type="cofactor">
    <cofactor evidence="1">
        <name>Zn(2+)</name>
        <dbReference type="ChEBI" id="CHEBI:29105"/>
    </cofactor>
    <text evidence="1">Binds 2 Zn(2+) ions per monomer.</text>
</comment>
<comment type="subunit">
    <text evidence="1">Homodimer.</text>
</comment>
<comment type="subcellular location">
    <subcellularLocation>
        <location evidence="1">Cytoplasm</location>
    </subcellularLocation>
</comment>
<comment type="induction">
    <text>By heat shock.</text>
</comment>
<comment type="domain">
    <text evidence="1">The J domain is necessary and sufficient to stimulate DnaK ATPase activity. Zinc center 1 plays an important role in the autonomous, DnaK-independent chaperone activity of DnaJ. Zinc center 2 is essential for interaction with DnaK and for DnaJ activity.</text>
</comment>
<comment type="similarity">
    <text evidence="1">Belongs to the DnaJ family.</text>
</comment>